<feature type="chain" id="PRO_0000327524" description="H/ACA ribonucleoprotein complex subunit GAR1">
    <location>
        <begin position="1"/>
        <end position="221"/>
    </location>
</feature>
<feature type="region of interest" description="Disordered" evidence="2">
    <location>
        <begin position="1"/>
        <end position="42"/>
    </location>
</feature>
<feature type="region of interest" description="RGG-box 1">
    <location>
        <begin position="4"/>
        <end position="35"/>
    </location>
</feature>
<feature type="region of interest" description="Disordered" evidence="2">
    <location>
        <begin position="130"/>
        <end position="221"/>
    </location>
</feature>
<feature type="region of interest" description="RGG-box 2">
    <location>
        <begin position="152"/>
        <end position="220"/>
    </location>
</feature>
<feature type="compositionally biased region" description="Gly residues" evidence="2">
    <location>
        <begin position="1"/>
        <end position="35"/>
    </location>
</feature>
<feature type="compositionally biased region" description="Gly residues" evidence="2">
    <location>
        <begin position="150"/>
        <end position="221"/>
    </location>
</feature>
<gene>
    <name type="primary">GAR1</name>
    <name type="ORF">BC1G_11335</name>
    <name type="ORF">BCIN_02g06650</name>
</gene>
<evidence type="ECO:0000250" key="1">
    <source>
        <dbReference type="UniProtKB" id="P28007"/>
    </source>
</evidence>
<evidence type="ECO:0000256" key="2">
    <source>
        <dbReference type="SAM" id="MobiDB-lite"/>
    </source>
</evidence>
<evidence type="ECO:0000305" key="3"/>
<accession>A6SDR8</accession>
<accession>A0A384J9U3</accession>
<sequence>MSFRGGSRGGRGTGANAGFSGGRGGFGGRGGGRGGFQQRDNGPPADVFAMGSFLHASEGEIVCESINTKIPYFNAPIYLENKTSIGKVDEILGPINQVYFTIKPTEGIQATSFKTGDKFYIGGDKLLPLEKFLPKPKPPPGAPKPKRAGGARGGRGGPMRGGRGGGRGAPRGGRGGFTPRGGSGGFSRGGGGGGFSRGGGGFTPRGGARGGSRGGFSRGGR</sequence>
<keyword id="KW-0539">Nucleus</keyword>
<keyword id="KW-1185">Reference proteome</keyword>
<keyword id="KW-0677">Repeat</keyword>
<keyword id="KW-0687">Ribonucleoprotein</keyword>
<keyword id="KW-0690">Ribosome biogenesis</keyword>
<keyword id="KW-0694">RNA-binding</keyword>
<keyword id="KW-0698">rRNA processing</keyword>
<protein>
    <recommendedName>
        <fullName>H/ACA ribonucleoprotein complex subunit GAR1</fullName>
    </recommendedName>
    <alternativeName>
        <fullName>snoRNP protein GAR1</fullName>
    </alternativeName>
</protein>
<reference key="1">
    <citation type="journal article" date="2011" name="PLoS Genet.">
        <title>Genomic analysis of the necrotrophic fungal pathogens Sclerotinia sclerotiorum and Botrytis cinerea.</title>
        <authorList>
            <person name="Amselem J."/>
            <person name="Cuomo C.A."/>
            <person name="van Kan J.A.L."/>
            <person name="Viaud M."/>
            <person name="Benito E.P."/>
            <person name="Couloux A."/>
            <person name="Coutinho P.M."/>
            <person name="de Vries R.P."/>
            <person name="Dyer P.S."/>
            <person name="Fillinger S."/>
            <person name="Fournier E."/>
            <person name="Gout L."/>
            <person name="Hahn M."/>
            <person name="Kohn L."/>
            <person name="Lapalu N."/>
            <person name="Plummer K.M."/>
            <person name="Pradier J.-M."/>
            <person name="Quevillon E."/>
            <person name="Sharon A."/>
            <person name="Simon A."/>
            <person name="ten Have A."/>
            <person name="Tudzynski B."/>
            <person name="Tudzynski P."/>
            <person name="Wincker P."/>
            <person name="Andrew M."/>
            <person name="Anthouard V."/>
            <person name="Beever R.E."/>
            <person name="Beffa R."/>
            <person name="Benoit I."/>
            <person name="Bouzid O."/>
            <person name="Brault B."/>
            <person name="Chen Z."/>
            <person name="Choquer M."/>
            <person name="Collemare J."/>
            <person name="Cotton P."/>
            <person name="Danchin E.G."/>
            <person name="Da Silva C."/>
            <person name="Gautier A."/>
            <person name="Giraud C."/>
            <person name="Giraud T."/>
            <person name="Gonzalez C."/>
            <person name="Grossetete S."/>
            <person name="Gueldener U."/>
            <person name="Henrissat B."/>
            <person name="Howlett B.J."/>
            <person name="Kodira C."/>
            <person name="Kretschmer M."/>
            <person name="Lappartient A."/>
            <person name="Leroch M."/>
            <person name="Levis C."/>
            <person name="Mauceli E."/>
            <person name="Neuveglise C."/>
            <person name="Oeser B."/>
            <person name="Pearson M."/>
            <person name="Poulain J."/>
            <person name="Poussereau N."/>
            <person name="Quesneville H."/>
            <person name="Rascle C."/>
            <person name="Schumacher J."/>
            <person name="Segurens B."/>
            <person name="Sexton A."/>
            <person name="Silva E."/>
            <person name="Sirven C."/>
            <person name="Soanes D.M."/>
            <person name="Talbot N.J."/>
            <person name="Templeton M."/>
            <person name="Yandava C."/>
            <person name="Yarden O."/>
            <person name="Zeng Q."/>
            <person name="Rollins J.A."/>
            <person name="Lebrun M.-H."/>
            <person name="Dickman M."/>
        </authorList>
    </citation>
    <scope>NUCLEOTIDE SEQUENCE [LARGE SCALE GENOMIC DNA]</scope>
    <source>
        <strain>B05.10</strain>
    </source>
</reference>
<reference key="2">
    <citation type="journal article" date="2012" name="Eukaryot. Cell">
        <title>Genome update of Botrytis cinerea strains B05.10 and T4.</title>
        <authorList>
            <person name="Staats M."/>
            <person name="van Kan J.A.L."/>
        </authorList>
    </citation>
    <scope>NUCLEOTIDE SEQUENCE [LARGE SCALE GENOMIC DNA]</scope>
    <scope>GENOME REANNOTATION</scope>
    <source>
        <strain>B05.10</strain>
    </source>
</reference>
<reference key="3">
    <citation type="journal article" date="2017" name="Mol. Plant Pathol.">
        <title>A gapless genome sequence of the fungus Botrytis cinerea.</title>
        <authorList>
            <person name="van Kan J.A.L."/>
            <person name="Stassen J.H.M."/>
            <person name="Mosbach A."/>
            <person name="van der Lee T.A.J."/>
            <person name="Faino L."/>
            <person name="Farmer A.D."/>
            <person name="Papasotiriou D.G."/>
            <person name="Zhou S."/>
            <person name="Seidl M.F."/>
            <person name="Cottam E."/>
            <person name="Edel D."/>
            <person name="Hahn M."/>
            <person name="Schwartz D.C."/>
            <person name="Dietrich R.A."/>
            <person name="Widdison S."/>
            <person name="Scalliet G."/>
        </authorList>
    </citation>
    <scope>NUCLEOTIDE SEQUENCE [LARGE SCALE GENOMIC DNA]</scope>
    <scope>GENOME REANNOTATION</scope>
    <source>
        <strain>B05.10</strain>
    </source>
</reference>
<proteinExistence type="inferred from homology"/>
<name>GAR1_BOTFB</name>
<dbReference type="EMBL" id="CP009806">
    <property type="protein sequence ID" value="ATZ47376.1"/>
    <property type="molecule type" value="Genomic_DNA"/>
</dbReference>
<dbReference type="SMR" id="A6SDR8"/>
<dbReference type="EnsemblFungi" id="Bcin02g06650.1">
    <property type="protein sequence ID" value="Bcin02p06650.1"/>
    <property type="gene ID" value="Bcin02g06650"/>
</dbReference>
<dbReference type="GeneID" id="5431046"/>
<dbReference type="KEGG" id="bfu:BCIN_02g06650"/>
<dbReference type="VEuPathDB" id="FungiDB:Bcin02g06650"/>
<dbReference type="OMA" id="KPQDGIV"/>
<dbReference type="OrthoDB" id="2187159at2759"/>
<dbReference type="Proteomes" id="UP000001798">
    <property type="component" value="Chromosome bcin02"/>
</dbReference>
<dbReference type="GO" id="GO:0031429">
    <property type="term" value="C:box H/ACA snoRNP complex"/>
    <property type="evidence" value="ECO:0007669"/>
    <property type="project" value="TreeGrafter"/>
</dbReference>
<dbReference type="GO" id="GO:0034513">
    <property type="term" value="F:box H/ACA snoRNA binding"/>
    <property type="evidence" value="ECO:0007669"/>
    <property type="project" value="TreeGrafter"/>
</dbReference>
<dbReference type="GO" id="GO:0000454">
    <property type="term" value="P:snoRNA guided rRNA pseudouridine synthesis"/>
    <property type="evidence" value="ECO:0007669"/>
    <property type="project" value="TreeGrafter"/>
</dbReference>
<dbReference type="FunFam" id="2.40.10.230:FF:000001">
    <property type="entry name" value="H/ACA ribonucleoprotein complex subunit"/>
    <property type="match status" value="1"/>
</dbReference>
<dbReference type="Gene3D" id="2.40.10.230">
    <property type="entry name" value="Probable tRNA pseudouridine synthase domain"/>
    <property type="match status" value="1"/>
</dbReference>
<dbReference type="InterPro" id="IPR038664">
    <property type="entry name" value="Gar1/Naf1_Cbf5-bd_sf"/>
</dbReference>
<dbReference type="InterPro" id="IPR007504">
    <property type="entry name" value="H/ACA_rnp_Gar1/Naf1"/>
</dbReference>
<dbReference type="InterPro" id="IPR009000">
    <property type="entry name" value="Transl_B-barrel_sf"/>
</dbReference>
<dbReference type="PANTHER" id="PTHR23237:SF6">
    <property type="entry name" value="H_ACA RIBONUCLEOPROTEIN COMPLEX SUBUNIT 1"/>
    <property type="match status" value="1"/>
</dbReference>
<dbReference type="PANTHER" id="PTHR23237">
    <property type="entry name" value="NUCLEOLAR PROTEIN FAMILY A MEMBER 1 SNORNP PROTEIN GAR1"/>
    <property type="match status" value="1"/>
</dbReference>
<dbReference type="Pfam" id="PF04410">
    <property type="entry name" value="Gar1"/>
    <property type="match status" value="1"/>
</dbReference>
<dbReference type="SUPFAM" id="SSF50447">
    <property type="entry name" value="Translation proteins"/>
    <property type="match status" value="1"/>
</dbReference>
<comment type="function">
    <text evidence="1">Non-catalytic component of the H/ACA small nucleolar ribonucleoprotein (H/ACA snoRNP), which catalyzes pseudouridylation of rRNA and is required for ribosome biogenesis. This involves the isomerization of uridine such that the ribose is subsequently attached to C5, instead of the normal N1. Pseudouridine ('psi') residues may serve to stabilize the conformation of rRNAs. The H/ACA snoRNP complex also mediates pseudouridylation of other types of RNAs. The H/ACA snoRNP complex mediates pseudouridylation at position 93 in U2 snRNA.</text>
</comment>
<comment type="subunit">
    <text evidence="1">Component of the small nucleolar ribonucleoprotein particles containing H/ACA-type snoRNAs (H/ACA snoRNPs).</text>
</comment>
<comment type="subcellular location">
    <subcellularLocation>
        <location evidence="1">Nucleus</location>
        <location evidence="1">Nucleolus</location>
    </subcellularLocation>
</comment>
<comment type="similarity">
    <text evidence="3">Belongs to the GAR1 family.</text>
</comment>
<organism>
    <name type="scientific">Botryotinia fuckeliana (strain B05.10)</name>
    <name type="common">Noble rot fungus</name>
    <name type="synonym">Botrytis cinerea</name>
    <dbReference type="NCBI Taxonomy" id="332648"/>
    <lineage>
        <taxon>Eukaryota</taxon>
        <taxon>Fungi</taxon>
        <taxon>Dikarya</taxon>
        <taxon>Ascomycota</taxon>
        <taxon>Pezizomycotina</taxon>
        <taxon>Leotiomycetes</taxon>
        <taxon>Helotiales</taxon>
        <taxon>Sclerotiniaceae</taxon>
        <taxon>Botrytis</taxon>
    </lineage>
</organism>